<keyword id="KW-0963">Cytoplasm</keyword>
<keyword id="KW-0269">Exonuclease</keyword>
<keyword id="KW-0378">Hydrolase</keyword>
<keyword id="KW-0479">Metal-binding</keyword>
<keyword id="KW-0540">Nuclease</keyword>
<keyword id="KW-0539">Nucleus</keyword>
<keyword id="KW-1185">Reference proteome</keyword>
<keyword id="KW-0694">RNA-binding</keyword>
<keyword id="KW-0804">Transcription</keyword>
<keyword id="KW-0805">Transcription regulation</keyword>
<proteinExistence type="evidence at transcript level"/>
<comment type="function">
    <text evidence="1">Ubiquitous transcription factor required for a diverse set of processes. It is a component of the CCR4 complex involved in the control of gene expression (By similarity).</text>
</comment>
<comment type="catalytic activity">
    <reaction>
        <text>Exonucleolytic cleavage of poly(A) to 5'-AMP.</text>
        <dbReference type="EC" id="3.1.13.4"/>
    </reaction>
</comment>
<comment type="cofactor">
    <cofactor evidence="1">
        <name>a divalent metal cation</name>
        <dbReference type="ChEBI" id="CHEBI:60240"/>
    </cofactor>
</comment>
<comment type="subunit">
    <text evidence="1">Component of the CCR4-NOT complex, at least composed of CRR4 and CAF1 proteins.</text>
</comment>
<comment type="subcellular location">
    <subcellularLocation>
        <location evidence="1">Nucleus</location>
    </subcellularLocation>
    <subcellularLocation>
        <location evidence="1">Cytoplasm</location>
    </subcellularLocation>
</comment>
<comment type="similarity">
    <text evidence="2">Belongs to the CAF1 family.</text>
</comment>
<organism>
    <name type="scientific">Arabidopsis thaliana</name>
    <name type="common">Mouse-ear cress</name>
    <dbReference type="NCBI Taxonomy" id="3702"/>
    <lineage>
        <taxon>Eukaryota</taxon>
        <taxon>Viridiplantae</taxon>
        <taxon>Streptophyta</taxon>
        <taxon>Embryophyta</taxon>
        <taxon>Tracheophyta</taxon>
        <taxon>Spermatophyta</taxon>
        <taxon>Magnoliopsida</taxon>
        <taxon>eudicotyledons</taxon>
        <taxon>Gunneridae</taxon>
        <taxon>Pentapetalae</taxon>
        <taxon>rosids</taxon>
        <taxon>malvids</taxon>
        <taxon>Brassicales</taxon>
        <taxon>Brassicaceae</taxon>
        <taxon>Camelineae</taxon>
        <taxon>Arabidopsis</taxon>
    </lineage>
</organism>
<feature type="chain" id="PRO_0000371551" description="Probable CCR4-associated factor 1 homolog 1">
    <location>
        <begin position="1"/>
        <end position="360"/>
    </location>
</feature>
<feature type="binding site" evidence="1">
    <location>
        <position position="37"/>
    </location>
    <ligand>
        <name>a divalent metal cation</name>
        <dbReference type="ChEBI" id="CHEBI:60240"/>
        <note>catalytic</note>
    </ligand>
</feature>
<feature type="binding site" evidence="1">
    <location>
        <position position="39"/>
    </location>
    <ligand>
        <name>a divalent metal cation</name>
        <dbReference type="ChEBI" id="CHEBI:60240"/>
        <note>catalytic</note>
    </ligand>
</feature>
<feature type="binding site" evidence="1">
    <location>
        <position position="155"/>
    </location>
    <ligand>
        <name>a divalent metal cation</name>
        <dbReference type="ChEBI" id="CHEBI:60240"/>
        <note>catalytic</note>
    </ligand>
</feature>
<feature type="binding site" evidence="1">
    <location>
        <position position="226"/>
    </location>
    <ligand>
        <name>a divalent metal cation</name>
        <dbReference type="ChEBI" id="CHEBI:60240"/>
        <note>catalytic</note>
    </ligand>
</feature>
<accession>Q9SHJ0</accession>
<gene>
    <name type="primary">CAF1-1</name>
    <name type="ordered locus">At1g06450</name>
    <name type="ORF">F12K11.20</name>
</gene>
<dbReference type="EC" id="3.1.13.4"/>
<dbReference type="EMBL" id="AC007592">
    <property type="protein sequence ID" value="AAF24820.1"/>
    <property type="molecule type" value="Genomic_DNA"/>
</dbReference>
<dbReference type="EMBL" id="CP002684">
    <property type="protein sequence ID" value="AEE27988.1"/>
    <property type="molecule type" value="Genomic_DNA"/>
</dbReference>
<dbReference type="EMBL" id="AK118108">
    <property type="protein sequence ID" value="BAC42735.1"/>
    <property type="molecule type" value="mRNA"/>
</dbReference>
<dbReference type="EMBL" id="BT005529">
    <property type="protein sequence ID" value="AAO63949.1"/>
    <property type="molecule type" value="mRNA"/>
</dbReference>
<dbReference type="PIR" id="D86200">
    <property type="entry name" value="D86200"/>
</dbReference>
<dbReference type="RefSeq" id="NP_172133.1">
    <property type="nucleotide sequence ID" value="NM_100525.3"/>
</dbReference>
<dbReference type="SMR" id="Q9SHJ0"/>
<dbReference type="BioGRID" id="22398">
    <property type="interactions" value="4"/>
</dbReference>
<dbReference type="FunCoup" id="Q9SHJ0">
    <property type="interactions" value="112"/>
</dbReference>
<dbReference type="IntAct" id="Q9SHJ0">
    <property type="interactions" value="4"/>
</dbReference>
<dbReference type="STRING" id="3702.Q9SHJ0"/>
<dbReference type="PaxDb" id="3702-AT1G06450.1"/>
<dbReference type="ProteomicsDB" id="239146"/>
<dbReference type="DNASU" id="837157"/>
<dbReference type="EnsemblPlants" id="AT1G06450.1">
    <property type="protein sequence ID" value="AT1G06450.1"/>
    <property type="gene ID" value="AT1G06450"/>
</dbReference>
<dbReference type="GeneID" id="837157"/>
<dbReference type="Gramene" id="AT1G06450.1">
    <property type="protein sequence ID" value="AT1G06450.1"/>
    <property type="gene ID" value="AT1G06450"/>
</dbReference>
<dbReference type="KEGG" id="ath:AT1G06450"/>
<dbReference type="Araport" id="AT1G06450"/>
<dbReference type="TAIR" id="AT1G06450">
    <property type="gene designation" value="CAF1G"/>
</dbReference>
<dbReference type="eggNOG" id="KOG0304">
    <property type="taxonomic scope" value="Eukaryota"/>
</dbReference>
<dbReference type="HOGENOM" id="CLU_027974_1_3_1"/>
<dbReference type="InParanoid" id="Q9SHJ0"/>
<dbReference type="OMA" id="AYDFAYF"/>
<dbReference type="PhylomeDB" id="Q9SHJ0"/>
<dbReference type="PRO" id="PR:Q9SHJ0"/>
<dbReference type="Proteomes" id="UP000006548">
    <property type="component" value="Chromosome 1"/>
</dbReference>
<dbReference type="ExpressionAtlas" id="Q9SHJ0">
    <property type="expression patterns" value="baseline and differential"/>
</dbReference>
<dbReference type="GO" id="GO:0030014">
    <property type="term" value="C:CCR4-NOT complex"/>
    <property type="evidence" value="ECO:0007669"/>
    <property type="project" value="InterPro"/>
</dbReference>
<dbReference type="GO" id="GO:0005737">
    <property type="term" value="C:cytoplasm"/>
    <property type="evidence" value="ECO:0007669"/>
    <property type="project" value="UniProtKB-SubCell"/>
</dbReference>
<dbReference type="GO" id="GO:0005634">
    <property type="term" value="C:nucleus"/>
    <property type="evidence" value="ECO:0007669"/>
    <property type="project" value="UniProtKB-SubCell"/>
</dbReference>
<dbReference type="GO" id="GO:0046872">
    <property type="term" value="F:metal ion binding"/>
    <property type="evidence" value="ECO:0007669"/>
    <property type="project" value="UniProtKB-KW"/>
</dbReference>
<dbReference type="GO" id="GO:0004535">
    <property type="term" value="F:poly(A)-specific ribonuclease activity"/>
    <property type="evidence" value="ECO:0007669"/>
    <property type="project" value="UniProtKB-EC"/>
</dbReference>
<dbReference type="GO" id="GO:0003723">
    <property type="term" value="F:RNA binding"/>
    <property type="evidence" value="ECO:0007669"/>
    <property type="project" value="UniProtKB-KW"/>
</dbReference>
<dbReference type="FunFam" id="3.30.420.10:FF:000223">
    <property type="entry name" value="Probable CCR4-associated factor 1 homolog 5"/>
    <property type="match status" value="1"/>
</dbReference>
<dbReference type="Gene3D" id="3.30.420.10">
    <property type="entry name" value="Ribonuclease H-like superfamily/Ribonuclease H"/>
    <property type="match status" value="1"/>
</dbReference>
<dbReference type="InterPro" id="IPR039637">
    <property type="entry name" value="CNOT7/CNOT8/Pop2"/>
</dbReference>
<dbReference type="InterPro" id="IPR006941">
    <property type="entry name" value="RNase_CAF1"/>
</dbReference>
<dbReference type="InterPro" id="IPR012337">
    <property type="entry name" value="RNaseH-like_sf"/>
</dbReference>
<dbReference type="InterPro" id="IPR036397">
    <property type="entry name" value="RNaseH_sf"/>
</dbReference>
<dbReference type="PANTHER" id="PTHR10797">
    <property type="entry name" value="CCR4-NOT TRANSCRIPTION COMPLEX SUBUNIT"/>
    <property type="match status" value="1"/>
</dbReference>
<dbReference type="Pfam" id="PF04857">
    <property type="entry name" value="CAF1"/>
    <property type="match status" value="2"/>
</dbReference>
<dbReference type="SUPFAM" id="SSF53098">
    <property type="entry name" value="Ribonuclease H-like"/>
    <property type="match status" value="1"/>
</dbReference>
<protein>
    <recommendedName>
        <fullName>Probable CCR4-associated factor 1 homolog 1</fullName>
        <ecNumber>3.1.13.4</ecNumber>
    </recommendedName>
</protein>
<sequence length="360" mass="40478">MNEIHQPLARRVWRSNVDEEMARMAECLKRFPLIAFDTEYPGIIFRTYFDSSSDECYRAMKGNVENTKLIQCGFTLFNAKGEIGGVWEINFSNFGDPSDTRNELSIEFLRRHGLDLQKIRDEGVDMFGYGFFPKLMTVFRSQKHVEFVTFQGAYDFAYFLSILNHGKLPETHGEFATEVVKVFGQVYDTKVMAGFCEGLGEHLGLSKLAQLLQITRVGRAHHAGSDSLMTALVFIKLKHVYEDSRFARGLIYGIGKSNLVAAPAPAPVPEPTLPLMCQQNVASYPVFHNGYVQNYEQPQLVSYDPSGAPWAFCNATGTYVQLTHLPASTFAYPSQTPSATVDYLGPVPNYYNNNACYVVE</sequence>
<evidence type="ECO:0000250" key="1"/>
<evidence type="ECO:0000305" key="2"/>
<name>CAF1A_ARATH</name>
<reference key="1">
    <citation type="journal article" date="2000" name="Nature">
        <title>Sequence and analysis of chromosome 1 of the plant Arabidopsis thaliana.</title>
        <authorList>
            <person name="Theologis A."/>
            <person name="Ecker J.R."/>
            <person name="Palm C.J."/>
            <person name="Federspiel N.A."/>
            <person name="Kaul S."/>
            <person name="White O."/>
            <person name="Alonso J."/>
            <person name="Altafi H."/>
            <person name="Araujo R."/>
            <person name="Bowman C.L."/>
            <person name="Brooks S.Y."/>
            <person name="Buehler E."/>
            <person name="Chan A."/>
            <person name="Chao Q."/>
            <person name="Chen H."/>
            <person name="Cheuk R.F."/>
            <person name="Chin C.W."/>
            <person name="Chung M.K."/>
            <person name="Conn L."/>
            <person name="Conway A.B."/>
            <person name="Conway A.R."/>
            <person name="Creasy T.H."/>
            <person name="Dewar K."/>
            <person name="Dunn P."/>
            <person name="Etgu P."/>
            <person name="Feldblyum T.V."/>
            <person name="Feng J.-D."/>
            <person name="Fong B."/>
            <person name="Fujii C.Y."/>
            <person name="Gill J.E."/>
            <person name="Goldsmith A.D."/>
            <person name="Haas B."/>
            <person name="Hansen N.F."/>
            <person name="Hughes B."/>
            <person name="Huizar L."/>
            <person name="Hunter J.L."/>
            <person name="Jenkins J."/>
            <person name="Johnson-Hopson C."/>
            <person name="Khan S."/>
            <person name="Khaykin E."/>
            <person name="Kim C.J."/>
            <person name="Koo H.L."/>
            <person name="Kremenetskaia I."/>
            <person name="Kurtz D.B."/>
            <person name="Kwan A."/>
            <person name="Lam B."/>
            <person name="Langin-Hooper S."/>
            <person name="Lee A."/>
            <person name="Lee J.M."/>
            <person name="Lenz C.A."/>
            <person name="Li J.H."/>
            <person name="Li Y.-P."/>
            <person name="Lin X."/>
            <person name="Liu S.X."/>
            <person name="Liu Z.A."/>
            <person name="Luros J.S."/>
            <person name="Maiti R."/>
            <person name="Marziali A."/>
            <person name="Militscher J."/>
            <person name="Miranda M."/>
            <person name="Nguyen M."/>
            <person name="Nierman W.C."/>
            <person name="Osborne B.I."/>
            <person name="Pai G."/>
            <person name="Peterson J."/>
            <person name="Pham P.K."/>
            <person name="Rizzo M."/>
            <person name="Rooney T."/>
            <person name="Rowley D."/>
            <person name="Sakano H."/>
            <person name="Salzberg S.L."/>
            <person name="Schwartz J.R."/>
            <person name="Shinn P."/>
            <person name="Southwick A.M."/>
            <person name="Sun H."/>
            <person name="Tallon L.J."/>
            <person name="Tambunga G."/>
            <person name="Toriumi M.J."/>
            <person name="Town C.D."/>
            <person name="Utterback T."/>
            <person name="Van Aken S."/>
            <person name="Vaysberg M."/>
            <person name="Vysotskaia V.S."/>
            <person name="Walker M."/>
            <person name="Wu D."/>
            <person name="Yu G."/>
            <person name="Fraser C.M."/>
            <person name="Venter J.C."/>
            <person name="Davis R.W."/>
        </authorList>
    </citation>
    <scope>NUCLEOTIDE SEQUENCE [LARGE SCALE GENOMIC DNA]</scope>
    <source>
        <strain>cv. Columbia</strain>
    </source>
</reference>
<reference key="2">
    <citation type="journal article" date="2017" name="Plant J.">
        <title>Araport11: a complete reannotation of the Arabidopsis thaliana reference genome.</title>
        <authorList>
            <person name="Cheng C.Y."/>
            <person name="Krishnakumar V."/>
            <person name="Chan A.P."/>
            <person name="Thibaud-Nissen F."/>
            <person name="Schobel S."/>
            <person name="Town C.D."/>
        </authorList>
    </citation>
    <scope>GENOME REANNOTATION</scope>
    <source>
        <strain>cv. Columbia</strain>
    </source>
</reference>
<reference key="3">
    <citation type="journal article" date="2002" name="Science">
        <title>Functional annotation of a full-length Arabidopsis cDNA collection.</title>
        <authorList>
            <person name="Seki M."/>
            <person name="Narusaka M."/>
            <person name="Kamiya A."/>
            <person name="Ishida J."/>
            <person name="Satou M."/>
            <person name="Sakurai T."/>
            <person name="Nakajima M."/>
            <person name="Enju A."/>
            <person name="Akiyama K."/>
            <person name="Oono Y."/>
            <person name="Muramatsu M."/>
            <person name="Hayashizaki Y."/>
            <person name="Kawai J."/>
            <person name="Carninci P."/>
            <person name="Itoh M."/>
            <person name="Ishii Y."/>
            <person name="Arakawa T."/>
            <person name="Shibata K."/>
            <person name="Shinagawa A."/>
            <person name="Shinozaki K."/>
        </authorList>
    </citation>
    <scope>NUCLEOTIDE SEQUENCE [LARGE SCALE MRNA]</scope>
    <source>
        <strain>cv. Columbia</strain>
    </source>
</reference>
<reference key="4">
    <citation type="journal article" date="2003" name="Science">
        <title>Empirical analysis of transcriptional activity in the Arabidopsis genome.</title>
        <authorList>
            <person name="Yamada K."/>
            <person name="Lim J."/>
            <person name="Dale J.M."/>
            <person name="Chen H."/>
            <person name="Shinn P."/>
            <person name="Palm C.J."/>
            <person name="Southwick A.M."/>
            <person name="Wu H.C."/>
            <person name="Kim C.J."/>
            <person name="Nguyen M."/>
            <person name="Pham P.K."/>
            <person name="Cheuk R.F."/>
            <person name="Karlin-Newmann G."/>
            <person name="Liu S.X."/>
            <person name="Lam B."/>
            <person name="Sakano H."/>
            <person name="Wu T."/>
            <person name="Yu G."/>
            <person name="Miranda M."/>
            <person name="Quach H.L."/>
            <person name="Tripp M."/>
            <person name="Chang C.H."/>
            <person name="Lee J.M."/>
            <person name="Toriumi M.J."/>
            <person name="Chan M.M."/>
            <person name="Tang C.C."/>
            <person name="Onodera C.S."/>
            <person name="Deng J.M."/>
            <person name="Akiyama K."/>
            <person name="Ansari Y."/>
            <person name="Arakawa T."/>
            <person name="Banh J."/>
            <person name="Banno F."/>
            <person name="Bowser L."/>
            <person name="Brooks S.Y."/>
            <person name="Carninci P."/>
            <person name="Chao Q."/>
            <person name="Choy N."/>
            <person name="Enju A."/>
            <person name="Goldsmith A.D."/>
            <person name="Gurjal M."/>
            <person name="Hansen N.F."/>
            <person name="Hayashizaki Y."/>
            <person name="Johnson-Hopson C."/>
            <person name="Hsuan V.W."/>
            <person name="Iida K."/>
            <person name="Karnes M."/>
            <person name="Khan S."/>
            <person name="Koesema E."/>
            <person name="Ishida J."/>
            <person name="Jiang P.X."/>
            <person name="Jones T."/>
            <person name="Kawai J."/>
            <person name="Kamiya A."/>
            <person name="Meyers C."/>
            <person name="Nakajima M."/>
            <person name="Narusaka M."/>
            <person name="Seki M."/>
            <person name="Sakurai T."/>
            <person name="Satou M."/>
            <person name="Tamse R."/>
            <person name="Vaysberg M."/>
            <person name="Wallender E.K."/>
            <person name="Wong C."/>
            <person name="Yamamura Y."/>
            <person name="Yuan S."/>
            <person name="Shinozaki K."/>
            <person name="Davis R.W."/>
            <person name="Theologis A."/>
            <person name="Ecker J.R."/>
        </authorList>
    </citation>
    <scope>NUCLEOTIDE SEQUENCE [LARGE SCALE MRNA]</scope>
    <source>
        <strain>cv. Columbia</strain>
    </source>
</reference>